<proteinExistence type="inferred from homology"/>
<gene>
    <name type="primary">narT</name>
    <name type="synonym">narK</name>
    <name type="ordered locus">SERP1980</name>
</gene>
<comment type="function">
    <text evidence="1">Probably required for nitrate uptake under anoxic conditions. Also possibly involved in excretion of nitrite produced by the dissimilatory reduction of nitrate (By similarity).</text>
</comment>
<comment type="subcellular location">
    <subcellularLocation>
        <location evidence="3">Cell membrane</location>
        <topology evidence="3">Multi-pass membrane protein</topology>
    </subcellularLocation>
</comment>
<comment type="induction">
    <text evidence="1">Positively regulated by the two-component system NreB/NreC.</text>
</comment>
<comment type="similarity">
    <text evidence="3">Belongs to the major facilitator superfamily. Nitrate/nitrite porter (TC 2.A.1.8) family.</text>
</comment>
<sequence>MNMKKGVSQLTLQTLSLVAGFMAWSIISPLMPFISQDVDISPGQISVILAIPVILGSVLRVPFGYLTNIVGAKWVFFWSFIVLLLPIFLLGQAQSPGMLMLSGFFLGIGGAIFSVGVTSVPKYFSKDKVGLANGIYGVGNIGTAVSSFCAPVLAGAIGWQNTVRSYLIILSIFAILMFFLGDKNEPKVKIPLMAQVKDLSKNYKLYYLSLWYFITFGAFVAFGIFLPNFLVDHFSIDKVDAGIRSGIFIALATFLRPVGGVIGDKFNAVQALIIDFVIMIIGALILSLSSHIVLFTIGCLAISICAGIGNGLIFKLAPSYFSKEAGSANGIVSMMGGLGGFFPPLVITFVTSITGSSHLAFFFLAIFGVIALITMIHLNKKEKAIRI</sequence>
<accession>Q5HLK7</accession>
<reference key="1">
    <citation type="journal article" date="2005" name="J. Bacteriol.">
        <title>Insights on evolution of virulence and resistance from the complete genome analysis of an early methicillin-resistant Staphylococcus aureus strain and a biofilm-producing methicillin-resistant Staphylococcus epidermidis strain.</title>
        <authorList>
            <person name="Gill S.R."/>
            <person name="Fouts D.E."/>
            <person name="Archer G.L."/>
            <person name="Mongodin E.F."/>
            <person name="DeBoy R.T."/>
            <person name="Ravel J."/>
            <person name="Paulsen I.T."/>
            <person name="Kolonay J.F."/>
            <person name="Brinkac L.M."/>
            <person name="Beanan M.J."/>
            <person name="Dodson R.J."/>
            <person name="Daugherty S.C."/>
            <person name="Madupu R."/>
            <person name="Angiuoli S.V."/>
            <person name="Durkin A.S."/>
            <person name="Haft D.H."/>
            <person name="Vamathevan J.J."/>
            <person name="Khouri H."/>
            <person name="Utterback T.R."/>
            <person name="Lee C."/>
            <person name="Dimitrov G."/>
            <person name="Jiang L."/>
            <person name="Qin H."/>
            <person name="Weidman J."/>
            <person name="Tran K."/>
            <person name="Kang K.H."/>
            <person name="Hance I.R."/>
            <person name="Nelson K.E."/>
            <person name="Fraser C.M."/>
        </authorList>
    </citation>
    <scope>NUCLEOTIDE SEQUENCE [LARGE SCALE GENOMIC DNA]</scope>
    <source>
        <strain>ATCC 35984 / DSM 28319 / BCRC 17069 / CCUG 31568 / BM 3577 / RP62A</strain>
    </source>
</reference>
<feature type="chain" id="PRO_0000349402" description="Probable nitrate transporter NarT">
    <location>
        <begin position="1"/>
        <end position="387"/>
    </location>
</feature>
<feature type="transmembrane region" description="Helical" evidence="2">
    <location>
        <begin position="14"/>
        <end position="34"/>
    </location>
</feature>
<feature type="transmembrane region" description="Helical" evidence="2">
    <location>
        <begin position="45"/>
        <end position="65"/>
    </location>
</feature>
<feature type="transmembrane region" description="Helical" evidence="2">
    <location>
        <begin position="69"/>
        <end position="89"/>
    </location>
</feature>
<feature type="transmembrane region" description="Helical" evidence="2">
    <location>
        <begin position="97"/>
        <end position="117"/>
    </location>
</feature>
<feature type="transmembrane region" description="Helical" evidence="2">
    <location>
        <begin position="137"/>
        <end position="157"/>
    </location>
</feature>
<feature type="transmembrane region" description="Helical" evidence="2">
    <location>
        <begin position="161"/>
        <end position="181"/>
    </location>
</feature>
<feature type="transmembrane region" description="Helical" evidence="2">
    <location>
        <begin position="211"/>
        <end position="231"/>
    </location>
</feature>
<feature type="transmembrane region" description="Helical" evidence="2">
    <location>
        <begin position="246"/>
        <end position="266"/>
    </location>
</feature>
<feature type="transmembrane region" description="Helical" evidence="2">
    <location>
        <begin position="268"/>
        <end position="288"/>
    </location>
</feature>
<feature type="transmembrane region" description="Helical" evidence="2">
    <location>
        <begin position="294"/>
        <end position="314"/>
    </location>
</feature>
<feature type="transmembrane region" description="Helical" evidence="2">
    <location>
        <begin position="330"/>
        <end position="350"/>
    </location>
</feature>
<feature type="transmembrane region" description="Helical" evidence="2">
    <location>
        <begin position="358"/>
        <end position="378"/>
    </location>
</feature>
<evidence type="ECO:0000250" key="1"/>
<evidence type="ECO:0000255" key="2"/>
<evidence type="ECO:0000305" key="3"/>
<name>NART_STAEQ</name>
<organism>
    <name type="scientific">Staphylococcus epidermidis (strain ATCC 35984 / DSM 28319 / BCRC 17069 / CCUG 31568 / BM 3577 / RP62A)</name>
    <dbReference type="NCBI Taxonomy" id="176279"/>
    <lineage>
        <taxon>Bacteria</taxon>
        <taxon>Bacillati</taxon>
        <taxon>Bacillota</taxon>
        <taxon>Bacilli</taxon>
        <taxon>Bacillales</taxon>
        <taxon>Staphylococcaceae</taxon>
        <taxon>Staphylococcus</taxon>
    </lineage>
</organism>
<keyword id="KW-1003">Cell membrane</keyword>
<keyword id="KW-0472">Membrane</keyword>
<keyword id="KW-0534">Nitrate assimilation</keyword>
<keyword id="KW-1185">Reference proteome</keyword>
<keyword id="KW-0812">Transmembrane</keyword>
<keyword id="KW-1133">Transmembrane helix</keyword>
<keyword id="KW-0813">Transport</keyword>
<protein>
    <recommendedName>
        <fullName>Probable nitrate transporter NarT</fullName>
    </recommendedName>
</protein>
<dbReference type="EMBL" id="CP000029">
    <property type="protein sequence ID" value="AAW52893.1"/>
    <property type="molecule type" value="Genomic_DNA"/>
</dbReference>
<dbReference type="RefSeq" id="WP_002438328.1">
    <property type="nucleotide sequence ID" value="NC_002976.3"/>
</dbReference>
<dbReference type="SMR" id="Q5HLK7"/>
<dbReference type="STRING" id="176279.SERP1980"/>
<dbReference type="KEGG" id="ser:SERP1980"/>
<dbReference type="eggNOG" id="COG2223">
    <property type="taxonomic scope" value="Bacteria"/>
</dbReference>
<dbReference type="HOGENOM" id="CLU_001265_14_0_9"/>
<dbReference type="Proteomes" id="UP000000531">
    <property type="component" value="Chromosome"/>
</dbReference>
<dbReference type="GO" id="GO:0005886">
    <property type="term" value="C:plasma membrane"/>
    <property type="evidence" value="ECO:0007669"/>
    <property type="project" value="UniProtKB-SubCell"/>
</dbReference>
<dbReference type="GO" id="GO:0015112">
    <property type="term" value="F:nitrate transmembrane transporter activity"/>
    <property type="evidence" value="ECO:0007669"/>
    <property type="project" value="InterPro"/>
</dbReference>
<dbReference type="GO" id="GO:0042128">
    <property type="term" value="P:nitrate assimilation"/>
    <property type="evidence" value="ECO:0007669"/>
    <property type="project" value="UniProtKB-KW"/>
</dbReference>
<dbReference type="CDD" id="cd17341">
    <property type="entry name" value="MFS_NRT2_like"/>
    <property type="match status" value="1"/>
</dbReference>
<dbReference type="Gene3D" id="1.20.1250.20">
    <property type="entry name" value="MFS general substrate transporter like domains"/>
    <property type="match status" value="2"/>
</dbReference>
<dbReference type="InterPro" id="IPR011701">
    <property type="entry name" value="MFS"/>
</dbReference>
<dbReference type="InterPro" id="IPR020846">
    <property type="entry name" value="MFS_dom"/>
</dbReference>
<dbReference type="InterPro" id="IPR036259">
    <property type="entry name" value="MFS_trans_sf"/>
</dbReference>
<dbReference type="InterPro" id="IPR044772">
    <property type="entry name" value="NO3_transporter"/>
</dbReference>
<dbReference type="PANTHER" id="PTHR23515">
    <property type="entry name" value="HIGH-AFFINITY NITRATE TRANSPORTER 2.3"/>
    <property type="match status" value="1"/>
</dbReference>
<dbReference type="Pfam" id="PF07690">
    <property type="entry name" value="MFS_1"/>
    <property type="match status" value="1"/>
</dbReference>
<dbReference type="SUPFAM" id="SSF103473">
    <property type="entry name" value="MFS general substrate transporter"/>
    <property type="match status" value="1"/>
</dbReference>
<dbReference type="PROSITE" id="PS50850">
    <property type="entry name" value="MFS"/>
    <property type="match status" value="1"/>
</dbReference>